<proteinExistence type="inferred from homology"/>
<protein>
    <recommendedName>
        <fullName evidence="1">Elongation factor G</fullName>
        <shortName evidence="1">EF-G</shortName>
    </recommendedName>
</protein>
<keyword id="KW-0963">Cytoplasm</keyword>
<keyword id="KW-0251">Elongation factor</keyword>
<keyword id="KW-0342">GTP-binding</keyword>
<keyword id="KW-0547">Nucleotide-binding</keyword>
<keyword id="KW-0648">Protein biosynthesis</keyword>
<organism>
    <name type="scientific">Pseudomonas fluorescens (strain SBW25)</name>
    <dbReference type="NCBI Taxonomy" id="216595"/>
    <lineage>
        <taxon>Bacteria</taxon>
        <taxon>Pseudomonadati</taxon>
        <taxon>Pseudomonadota</taxon>
        <taxon>Gammaproteobacteria</taxon>
        <taxon>Pseudomonadales</taxon>
        <taxon>Pseudomonadaceae</taxon>
        <taxon>Pseudomonas</taxon>
    </lineage>
</organism>
<gene>
    <name evidence="1" type="primary">fusA</name>
    <name type="ordered locus">PFLU_5530</name>
</gene>
<dbReference type="EMBL" id="AM181176">
    <property type="protein sequence ID" value="CAY52772.1"/>
    <property type="molecule type" value="Genomic_DNA"/>
</dbReference>
<dbReference type="RefSeq" id="WP_015886136.1">
    <property type="nucleotide sequence ID" value="NC_012660.1"/>
</dbReference>
<dbReference type="SMR" id="C3K2X9"/>
<dbReference type="STRING" id="294.SRM1_05182"/>
<dbReference type="GeneID" id="93467152"/>
<dbReference type="eggNOG" id="COG0480">
    <property type="taxonomic scope" value="Bacteria"/>
</dbReference>
<dbReference type="HOGENOM" id="CLU_002794_4_1_6"/>
<dbReference type="OrthoDB" id="9804431at2"/>
<dbReference type="GO" id="GO:0005737">
    <property type="term" value="C:cytoplasm"/>
    <property type="evidence" value="ECO:0007669"/>
    <property type="project" value="UniProtKB-SubCell"/>
</dbReference>
<dbReference type="GO" id="GO:0005525">
    <property type="term" value="F:GTP binding"/>
    <property type="evidence" value="ECO:0007669"/>
    <property type="project" value="UniProtKB-UniRule"/>
</dbReference>
<dbReference type="GO" id="GO:0003924">
    <property type="term" value="F:GTPase activity"/>
    <property type="evidence" value="ECO:0007669"/>
    <property type="project" value="InterPro"/>
</dbReference>
<dbReference type="GO" id="GO:0097216">
    <property type="term" value="F:guanosine tetraphosphate binding"/>
    <property type="evidence" value="ECO:0007669"/>
    <property type="project" value="UniProtKB-ARBA"/>
</dbReference>
<dbReference type="GO" id="GO:0003746">
    <property type="term" value="F:translation elongation factor activity"/>
    <property type="evidence" value="ECO:0007669"/>
    <property type="project" value="UniProtKB-UniRule"/>
</dbReference>
<dbReference type="GO" id="GO:0032790">
    <property type="term" value="P:ribosome disassembly"/>
    <property type="evidence" value="ECO:0007669"/>
    <property type="project" value="TreeGrafter"/>
</dbReference>
<dbReference type="CDD" id="cd01886">
    <property type="entry name" value="EF-G"/>
    <property type="match status" value="1"/>
</dbReference>
<dbReference type="CDD" id="cd16262">
    <property type="entry name" value="EFG_III"/>
    <property type="match status" value="1"/>
</dbReference>
<dbReference type="CDD" id="cd01434">
    <property type="entry name" value="EFG_mtEFG1_IV"/>
    <property type="match status" value="1"/>
</dbReference>
<dbReference type="CDD" id="cd03713">
    <property type="entry name" value="EFG_mtEFG_C"/>
    <property type="match status" value="1"/>
</dbReference>
<dbReference type="CDD" id="cd04088">
    <property type="entry name" value="EFG_mtEFG_II"/>
    <property type="match status" value="1"/>
</dbReference>
<dbReference type="FunFam" id="2.40.30.10:FF:000006">
    <property type="entry name" value="Elongation factor G"/>
    <property type="match status" value="1"/>
</dbReference>
<dbReference type="FunFam" id="3.30.230.10:FF:000003">
    <property type="entry name" value="Elongation factor G"/>
    <property type="match status" value="1"/>
</dbReference>
<dbReference type="FunFam" id="3.30.70.240:FF:000001">
    <property type="entry name" value="Elongation factor G"/>
    <property type="match status" value="1"/>
</dbReference>
<dbReference type="FunFam" id="3.30.70.870:FF:000001">
    <property type="entry name" value="Elongation factor G"/>
    <property type="match status" value="1"/>
</dbReference>
<dbReference type="FunFam" id="3.40.50.300:FF:000029">
    <property type="entry name" value="Elongation factor G"/>
    <property type="match status" value="1"/>
</dbReference>
<dbReference type="Gene3D" id="3.30.230.10">
    <property type="match status" value="1"/>
</dbReference>
<dbReference type="Gene3D" id="3.30.70.240">
    <property type="match status" value="1"/>
</dbReference>
<dbReference type="Gene3D" id="3.30.70.870">
    <property type="entry name" value="Elongation Factor G (Translational Gtpase), domain 3"/>
    <property type="match status" value="1"/>
</dbReference>
<dbReference type="Gene3D" id="3.40.50.300">
    <property type="entry name" value="P-loop containing nucleotide triphosphate hydrolases"/>
    <property type="match status" value="1"/>
</dbReference>
<dbReference type="Gene3D" id="2.40.30.10">
    <property type="entry name" value="Translation factors"/>
    <property type="match status" value="1"/>
</dbReference>
<dbReference type="HAMAP" id="MF_00054_B">
    <property type="entry name" value="EF_G_EF_2_B"/>
    <property type="match status" value="1"/>
</dbReference>
<dbReference type="InterPro" id="IPR041095">
    <property type="entry name" value="EFG_II"/>
</dbReference>
<dbReference type="InterPro" id="IPR009022">
    <property type="entry name" value="EFG_III"/>
</dbReference>
<dbReference type="InterPro" id="IPR035647">
    <property type="entry name" value="EFG_III/V"/>
</dbReference>
<dbReference type="InterPro" id="IPR047872">
    <property type="entry name" value="EFG_IV"/>
</dbReference>
<dbReference type="InterPro" id="IPR035649">
    <property type="entry name" value="EFG_V"/>
</dbReference>
<dbReference type="InterPro" id="IPR000640">
    <property type="entry name" value="EFG_V-like"/>
</dbReference>
<dbReference type="InterPro" id="IPR004161">
    <property type="entry name" value="EFTu-like_2"/>
</dbReference>
<dbReference type="InterPro" id="IPR031157">
    <property type="entry name" value="G_TR_CS"/>
</dbReference>
<dbReference type="InterPro" id="IPR027417">
    <property type="entry name" value="P-loop_NTPase"/>
</dbReference>
<dbReference type="InterPro" id="IPR020568">
    <property type="entry name" value="Ribosomal_Su5_D2-typ_SF"/>
</dbReference>
<dbReference type="InterPro" id="IPR014721">
    <property type="entry name" value="Ribsml_uS5_D2-typ_fold_subgr"/>
</dbReference>
<dbReference type="InterPro" id="IPR005225">
    <property type="entry name" value="Small_GTP-bd"/>
</dbReference>
<dbReference type="InterPro" id="IPR000795">
    <property type="entry name" value="T_Tr_GTP-bd_dom"/>
</dbReference>
<dbReference type="InterPro" id="IPR009000">
    <property type="entry name" value="Transl_B-barrel_sf"/>
</dbReference>
<dbReference type="InterPro" id="IPR004540">
    <property type="entry name" value="Transl_elong_EFG/EF2"/>
</dbReference>
<dbReference type="InterPro" id="IPR005517">
    <property type="entry name" value="Transl_elong_EFG/EF2_IV"/>
</dbReference>
<dbReference type="NCBIfam" id="TIGR00484">
    <property type="entry name" value="EF-G"/>
    <property type="match status" value="1"/>
</dbReference>
<dbReference type="NCBIfam" id="NF009381">
    <property type="entry name" value="PRK12740.1-5"/>
    <property type="match status" value="1"/>
</dbReference>
<dbReference type="NCBIfam" id="TIGR00231">
    <property type="entry name" value="small_GTP"/>
    <property type="match status" value="1"/>
</dbReference>
<dbReference type="PANTHER" id="PTHR43261:SF1">
    <property type="entry name" value="RIBOSOME-RELEASING FACTOR 2, MITOCHONDRIAL"/>
    <property type="match status" value="1"/>
</dbReference>
<dbReference type="PANTHER" id="PTHR43261">
    <property type="entry name" value="TRANSLATION ELONGATION FACTOR G-RELATED"/>
    <property type="match status" value="1"/>
</dbReference>
<dbReference type="Pfam" id="PF00679">
    <property type="entry name" value="EFG_C"/>
    <property type="match status" value="1"/>
</dbReference>
<dbReference type="Pfam" id="PF14492">
    <property type="entry name" value="EFG_III"/>
    <property type="match status" value="1"/>
</dbReference>
<dbReference type="Pfam" id="PF03764">
    <property type="entry name" value="EFG_IV"/>
    <property type="match status" value="1"/>
</dbReference>
<dbReference type="Pfam" id="PF00009">
    <property type="entry name" value="GTP_EFTU"/>
    <property type="match status" value="1"/>
</dbReference>
<dbReference type="Pfam" id="PF03144">
    <property type="entry name" value="GTP_EFTU_D2"/>
    <property type="match status" value="1"/>
</dbReference>
<dbReference type="PRINTS" id="PR00315">
    <property type="entry name" value="ELONGATNFCT"/>
</dbReference>
<dbReference type="SMART" id="SM00838">
    <property type="entry name" value="EFG_C"/>
    <property type="match status" value="1"/>
</dbReference>
<dbReference type="SMART" id="SM00889">
    <property type="entry name" value="EFG_IV"/>
    <property type="match status" value="1"/>
</dbReference>
<dbReference type="SUPFAM" id="SSF54980">
    <property type="entry name" value="EF-G C-terminal domain-like"/>
    <property type="match status" value="2"/>
</dbReference>
<dbReference type="SUPFAM" id="SSF52540">
    <property type="entry name" value="P-loop containing nucleoside triphosphate hydrolases"/>
    <property type="match status" value="1"/>
</dbReference>
<dbReference type="SUPFAM" id="SSF54211">
    <property type="entry name" value="Ribosomal protein S5 domain 2-like"/>
    <property type="match status" value="1"/>
</dbReference>
<dbReference type="SUPFAM" id="SSF50447">
    <property type="entry name" value="Translation proteins"/>
    <property type="match status" value="1"/>
</dbReference>
<dbReference type="PROSITE" id="PS00301">
    <property type="entry name" value="G_TR_1"/>
    <property type="match status" value="1"/>
</dbReference>
<dbReference type="PROSITE" id="PS51722">
    <property type="entry name" value="G_TR_2"/>
    <property type="match status" value="1"/>
</dbReference>
<reference key="1">
    <citation type="journal article" date="2009" name="Genome Biol.">
        <title>Genomic and genetic analyses of diversity and plant interactions of Pseudomonas fluorescens.</title>
        <authorList>
            <person name="Silby M.W."/>
            <person name="Cerdeno-Tarraga A.M."/>
            <person name="Vernikos G.S."/>
            <person name="Giddens S.R."/>
            <person name="Jackson R.W."/>
            <person name="Preston G.M."/>
            <person name="Zhang X.-X."/>
            <person name="Moon C.D."/>
            <person name="Gehrig S.M."/>
            <person name="Godfrey S.A.C."/>
            <person name="Knight C.G."/>
            <person name="Malone J.G."/>
            <person name="Robinson Z."/>
            <person name="Spiers A.J."/>
            <person name="Harris S."/>
            <person name="Challis G.L."/>
            <person name="Yaxley A.M."/>
            <person name="Harris D."/>
            <person name="Seeger K."/>
            <person name="Murphy L."/>
            <person name="Rutter S."/>
            <person name="Squares R."/>
            <person name="Quail M.A."/>
            <person name="Saunders E."/>
            <person name="Mavromatis K."/>
            <person name="Brettin T.S."/>
            <person name="Bentley S.D."/>
            <person name="Hothersall J."/>
            <person name="Stephens E."/>
            <person name="Thomas C.M."/>
            <person name="Parkhill J."/>
            <person name="Levy S.B."/>
            <person name="Rainey P.B."/>
            <person name="Thomson N.R."/>
        </authorList>
    </citation>
    <scope>NUCLEOTIDE SEQUENCE [LARGE SCALE GENOMIC DNA]</scope>
    <source>
        <strain>SBW25</strain>
    </source>
</reference>
<name>EFG_PSEFS</name>
<accession>C3K2X9</accession>
<sequence>MARTTPISRYRNIGIVAHVDAGKTTTTERVLFYTGKSHKMGEVHDGAATTDWMVQEQERGITITSAAITAFWKGSEKQYKDEHRFNVIDTPGHVDFTIEVERSLRVLDGAVVVFCGTSGVEPQSETVWRQANKYGVPRLVYVNKMDRAGANFLRVIGQIKQRLGHTPVPIQLAIGSEDNFQGQIDLLTMEAVYWNDADKGMVPVRKPIPAELQELADEWRNNMVEAAAEANEELMNKYLEGEELTNVEIKAALRQRTIAGEIVLAVCGSSFKNKGVPLVLDAVIDYLPAPVDIPAIKGTDPDDETIELERHADDAEPFSALAFKIATDPFVGTLTFVRVYSGVLNSGDGVINSVKGKKERVGRMVQMHANAREEIKEVRAGDIAALIGMKDVTTGETLCNADKPIILVRMDFPEPVISVAVEPKTKDDQEKMGIALGKLAQEDPSFRVKTDEETGQTIISGMGELHLDILVDRMRREFNVEANIGKPQVSYRERITKNCEIEGKFVRQSGGRGQFGHCWIRFAPADEGQEGLQFVNEVVGGVVPKEYIPAIQKGIEEQMKNGVVAGYPLIGLKATVFDGSYHDVDSNEMAFKVAASMATKQLAQKGGGELLEPIMAVEVVTPEDYMGDVMGDLNRRRGMILGMEDTVSGKVIRAEVPLGEMFGYATDVRSMSQGRASYSMEFKKYNTAPAHIAETVSKKQG</sequence>
<comment type="function">
    <text evidence="1">Catalyzes the GTP-dependent ribosomal translocation step during translation elongation. During this step, the ribosome changes from the pre-translocational (PRE) to the post-translocational (POST) state as the newly formed A-site-bound peptidyl-tRNA and P-site-bound deacylated tRNA move to the P and E sites, respectively. Catalyzes the coordinated movement of the two tRNA molecules, the mRNA and conformational changes in the ribosome.</text>
</comment>
<comment type="subcellular location">
    <subcellularLocation>
        <location evidence="1">Cytoplasm</location>
    </subcellularLocation>
</comment>
<comment type="similarity">
    <text evidence="1">Belongs to the TRAFAC class translation factor GTPase superfamily. Classic translation factor GTPase family. EF-G/EF-2 subfamily.</text>
</comment>
<feature type="chain" id="PRO_1000202308" description="Elongation factor G">
    <location>
        <begin position="1"/>
        <end position="701"/>
    </location>
</feature>
<feature type="domain" description="tr-type G">
    <location>
        <begin position="8"/>
        <end position="291"/>
    </location>
</feature>
<feature type="binding site" evidence="1">
    <location>
        <begin position="17"/>
        <end position="24"/>
    </location>
    <ligand>
        <name>GTP</name>
        <dbReference type="ChEBI" id="CHEBI:37565"/>
    </ligand>
</feature>
<feature type="binding site" evidence="1">
    <location>
        <begin position="89"/>
        <end position="93"/>
    </location>
    <ligand>
        <name>GTP</name>
        <dbReference type="ChEBI" id="CHEBI:37565"/>
    </ligand>
</feature>
<feature type="binding site" evidence="1">
    <location>
        <begin position="143"/>
        <end position="146"/>
    </location>
    <ligand>
        <name>GTP</name>
        <dbReference type="ChEBI" id="CHEBI:37565"/>
    </ligand>
</feature>
<evidence type="ECO:0000255" key="1">
    <source>
        <dbReference type="HAMAP-Rule" id="MF_00054"/>
    </source>
</evidence>